<gene>
    <name type="primary">Fgd6</name>
    <name type="synonym">Kiaa1362</name>
</gene>
<keyword id="KW-0002">3D-structure</keyword>
<keyword id="KW-0025">Alternative splicing</keyword>
<keyword id="KW-0963">Cytoplasm</keyword>
<keyword id="KW-0206">Cytoskeleton</keyword>
<keyword id="KW-0344">Guanine-nucleotide releasing factor</keyword>
<keyword id="KW-0479">Metal-binding</keyword>
<keyword id="KW-0597">Phosphoprotein</keyword>
<keyword id="KW-1185">Reference proteome</keyword>
<keyword id="KW-0677">Repeat</keyword>
<keyword id="KW-0862">Zinc</keyword>
<keyword id="KW-0863">Zinc-finger</keyword>
<comment type="function">
    <text evidence="1">May activate CDC42, a member of the Ras-like family of Rho- and Rac proteins, by exchanging bound GDP for free GTP. May play a role in regulating the actin cytoskeleton and cell shape (By similarity).</text>
</comment>
<comment type="subcellular location">
    <subcellularLocation>
        <location evidence="8">Cytoplasm</location>
    </subcellularLocation>
    <subcellularLocation>
        <location evidence="8">Cytoplasm</location>
        <location evidence="8">Cytoskeleton</location>
    </subcellularLocation>
</comment>
<comment type="alternative products">
    <event type="alternative splicing"/>
    <isoform>
        <id>Q69ZL1-1</id>
        <name>1</name>
        <sequence type="displayed"/>
    </isoform>
    <isoform>
        <id>Q69ZL1-2</id>
        <name>2</name>
        <sequence type="described" ref="VSP_013093"/>
    </isoform>
</comment>
<comment type="sequence caution" evidence="8">
    <conflict type="erroneous initiation">
        <sequence resource="EMBL-CDS" id="BAD32435"/>
    </conflict>
</comment>
<dbReference type="EMBL" id="AK173157">
    <property type="protein sequence ID" value="BAD32435.1"/>
    <property type="status" value="ALT_INIT"/>
    <property type="molecule type" value="mRNA"/>
</dbReference>
<dbReference type="EMBL" id="AK016940">
    <property type="protein sequence ID" value="BAB30510.2"/>
    <property type="molecule type" value="mRNA"/>
</dbReference>
<dbReference type="EMBL" id="AK044341">
    <property type="protein sequence ID" value="BAC31876.1"/>
    <property type="molecule type" value="mRNA"/>
</dbReference>
<dbReference type="EMBL" id="BC026860">
    <property type="protein sequence ID" value="AAH26860.2"/>
    <property type="molecule type" value="mRNA"/>
</dbReference>
<dbReference type="CCDS" id="CCDS48674.1">
    <molecule id="Q69ZL1-1"/>
</dbReference>
<dbReference type="RefSeq" id="NP_444302.4">
    <molecule id="Q69ZL1-1"/>
    <property type="nucleotide sequence ID" value="NM_053072.3"/>
</dbReference>
<dbReference type="PDB" id="1WGQ">
    <property type="method" value="NMR"/>
    <property type="chains" value="A=1303-1398"/>
</dbReference>
<dbReference type="PDBsum" id="1WGQ"/>
<dbReference type="SMR" id="Q69ZL1"/>
<dbReference type="BioGRID" id="199529">
    <property type="interactions" value="3"/>
</dbReference>
<dbReference type="FunCoup" id="Q69ZL1">
    <property type="interactions" value="835"/>
</dbReference>
<dbReference type="IntAct" id="Q69ZL1">
    <property type="interactions" value="1"/>
</dbReference>
<dbReference type="STRING" id="10090.ENSMUSP00000020208"/>
<dbReference type="iPTMnet" id="Q69ZL1"/>
<dbReference type="PhosphoSitePlus" id="Q69ZL1"/>
<dbReference type="SwissPalm" id="Q69ZL1"/>
<dbReference type="jPOST" id="Q69ZL1"/>
<dbReference type="PaxDb" id="10090-ENSMUSP00000020208"/>
<dbReference type="PeptideAtlas" id="Q69ZL1"/>
<dbReference type="ProteomicsDB" id="271567">
    <molecule id="Q69ZL1-1"/>
</dbReference>
<dbReference type="ProteomicsDB" id="271568">
    <molecule id="Q69ZL1-2"/>
</dbReference>
<dbReference type="Antibodypedia" id="1926">
    <property type="antibodies" value="96 antibodies from 16 providers"/>
</dbReference>
<dbReference type="DNASU" id="13998"/>
<dbReference type="Ensembl" id="ENSMUST00000020208.5">
    <molecule id="Q69ZL1-1"/>
    <property type="protein sequence ID" value="ENSMUSP00000020208.5"/>
    <property type="gene ID" value="ENSMUSG00000020021.5"/>
</dbReference>
<dbReference type="GeneID" id="13998"/>
<dbReference type="KEGG" id="mmu:13998"/>
<dbReference type="UCSC" id="uc011xlz.1">
    <molecule id="Q69ZL1-1"/>
    <property type="organism name" value="mouse"/>
</dbReference>
<dbReference type="AGR" id="MGI:1261419"/>
<dbReference type="CTD" id="55785"/>
<dbReference type="MGI" id="MGI:1261419">
    <property type="gene designation" value="Fgd6"/>
</dbReference>
<dbReference type="VEuPathDB" id="HostDB:ENSMUSG00000020021"/>
<dbReference type="eggNOG" id="KOG1729">
    <property type="taxonomic scope" value="Eukaryota"/>
</dbReference>
<dbReference type="GeneTree" id="ENSGT00940000156334"/>
<dbReference type="HOGENOM" id="CLU_004959_0_0_1"/>
<dbReference type="InParanoid" id="Q69ZL1"/>
<dbReference type="OMA" id="PMSSCKF"/>
<dbReference type="OrthoDB" id="245697at2759"/>
<dbReference type="PhylomeDB" id="Q69ZL1"/>
<dbReference type="TreeFam" id="TF343077"/>
<dbReference type="BioGRID-ORCS" id="13998">
    <property type="hits" value="0 hits in 76 CRISPR screens"/>
</dbReference>
<dbReference type="ChiTaRS" id="Fgd6">
    <property type="organism name" value="mouse"/>
</dbReference>
<dbReference type="EvolutionaryTrace" id="Q69ZL1"/>
<dbReference type="PRO" id="PR:Q69ZL1"/>
<dbReference type="Proteomes" id="UP000000589">
    <property type="component" value="Chromosome 10"/>
</dbReference>
<dbReference type="RNAct" id="Q69ZL1">
    <property type="molecule type" value="protein"/>
</dbReference>
<dbReference type="Bgee" id="ENSMUSG00000020021">
    <property type="expression patterns" value="Expressed in animal zygote and 209 other cell types or tissues"/>
</dbReference>
<dbReference type="GO" id="GO:0005737">
    <property type="term" value="C:cytoplasm"/>
    <property type="evidence" value="ECO:0007669"/>
    <property type="project" value="UniProtKB-SubCell"/>
</dbReference>
<dbReference type="GO" id="GO:0005856">
    <property type="term" value="C:cytoskeleton"/>
    <property type="evidence" value="ECO:0007669"/>
    <property type="project" value="UniProtKB-SubCell"/>
</dbReference>
<dbReference type="GO" id="GO:0005085">
    <property type="term" value="F:guanyl-nucleotide exchange factor activity"/>
    <property type="evidence" value="ECO:0007669"/>
    <property type="project" value="UniProtKB-KW"/>
</dbReference>
<dbReference type="GO" id="GO:0008270">
    <property type="term" value="F:zinc ion binding"/>
    <property type="evidence" value="ECO:0007669"/>
    <property type="project" value="UniProtKB-KW"/>
</dbReference>
<dbReference type="CDD" id="cd15743">
    <property type="entry name" value="FYVE_FGD6"/>
    <property type="match status" value="1"/>
</dbReference>
<dbReference type="CDD" id="cd15793">
    <property type="entry name" value="PH1_FGD6"/>
    <property type="match status" value="1"/>
</dbReference>
<dbReference type="CDD" id="cd13237">
    <property type="entry name" value="PH2_FGD5_FGD6"/>
    <property type="match status" value="1"/>
</dbReference>
<dbReference type="CDD" id="cd00160">
    <property type="entry name" value="RhoGEF"/>
    <property type="match status" value="1"/>
</dbReference>
<dbReference type="FunFam" id="3.30.40.10:FF:000061">
    <property type="entry name" value="FYVE, RhoGEF and PH domain containing 1"/>
    <property type="match status" value="1"/>
</dbReference>
<dbReference type="FunFam" id="2.30.29.30:FF:000158">
    <property type="entry name" value="FYVE, RhoGEF and PH domain containing 6"/>
    <property type="match status" value="1"/>
</dbReference>
<dbReference type="FunFam" id="1.20.900.10:FF:000024">
    <property type="entry name" value="FYVE, RhoGEF and PH domain-containing protein 6"/>
    <property type="match status" value="1"/>
</dbReference>
<dbReference type="FunFam" id="2.30.29.30:FF:000209">
    <property type="entry name" value="FYVE, RhoGEF and PH domain-containing protein 6"/>
    <property type="match status" value="1"/>
</dbReference>
<dbReference type="Gene3D" id="1.20.900.10">
    <property type="entry name" value="Dbl homology (DH) domain"/>
    <property type="match status" value="1"/>
</dbReference>
<dbReference type="Gene3D" id="2.30.29.30">
    <property type="entry name" value="Pleckstrin-homology domain (PH domain)/Phosphotyrosine-binding domain (PTB)"/>
    <property type="match status" value="2"/>
</dbReference>
<dbReference type="Gene3D" id="3.30.40.10">
    <property type="entry name" value="Zinc/RING finger domain, C3HC4 (zinc finger)"/>
    <property type="match status" value="1"/>
</dbReference>
<dbReference type="InterPro" id="IPR035899">
    <property type="entry name" value="DBL_dom_sf"/>
</dbReference>
<dbReference type="InterPro" id="IPR000219">
    <property type="entry name" value="DH_dom"/>
</dbReference>
<dbReference type="InterPro" id="IPR037743">
    <property type="entry name" value="FGD6_N_PH"/>
</dbReference>
<dbReference type="InterPro" id="IPR051092">
    <property type="entry name" value="FYVE_RhoGEF_PH"/>
</dbReference>
<dbReference type="InterPro" id="IPR011993">
    <property type="entry name" value="PH-like_dom_sf"/>
</dbReference>
<dbReference type="InterPro" id="IPR001849">
    <property type="entry name" value="PH_domain"/>
</dbReference>
<dbReference type="InterPro" id="IPR000306">
    <property type="entry name" value="Znf_FYVE"/>
</dbReference>
<dbReference type="InterPro" id="IPR017455">
    <property type="entry name" value="Znf_FYVE-rel"/>
</dbReference>
<dbReference type="InterPro" id="IPR013083">
    <property type="entry name" value="Znf_RING/FYVE/PHD"/>
</dbReference>
<dbReference type="PANTHER" id="PTHR12673">
    <property type="entry name" value="FACIOGENITAL DYSPLASIA PROTEIN"/>
    <property type="match status" value="1"/>
</dbReference>
<dbReference type="PANTHER" id="PTHR12673:SF12">
    <property type="entry name" value="FYVE, RHOGEF AND PH DOMAIN-CONTAINING PROTEIN 6"/>
    <property type="match status" value="1"/>
</dbReference>
<dbReference type="Pfam" id="PF01363">
    <property type="entry name" value="FYVE"/>
    <property type="match status" value="1"/>
</dbReference>
<dbReference type="Pfam" id="PF00169">
    <property type="entry name" value="PH"/>
    <property type="match status" value="2"/>
</dbReference>
<dbReference type="Pfam" id="PF00621">
    <property type="entry name" value="RhoGEF"/>
    <property type="match status" value="1"/>
</dbReference>
<dbReference type="SMART" id="SM00064">
    <property type="entry name" value="FYVE"/>
    <property type="match status" value="1"/>
</dbReference>
<dbReference type="SMART" id="SM00233">
    <property type="entry name" value="PH"/>
    <property type="match status" value="2"/>
</dbReference>
<dbReference type="SMART" id="SM00325">
    <property type="entry name" value="RhoGEF"/>
    <property type="match status" value="1"/>
</dbReference>
<dbReference type="SUPFAM" id="SSF48065">
    <property type="entry name" value="DBL homology domain (DH-domain)"/>
    <property type="match status" value="1"/>
</dbReference>
<dbReference type="SUPFAM" id="SSF50729">
    <property type="entry name" value="PH domain-like"/>
    <property type="match status" value="2"/>
</dbReference>
<dbReference type="PROSITE" id="PS50010">
    <property type="entry name" value="DH_2"/>
    <property type="match status" value="1"/>
</dbReference>
<dbReference type="PROSITE" id="PS50003">
    <property type="entry name" value="PH_DOMAIN"/>
    <property type="match status" value="2"/>
</dbReference>
<dbReference type="PROSITE" id="PS50178">
    <property type="entry name" value="ZF_FYVE"/>
    <property type="match status" value="1"/>
</dbReference>
<name>FGD6_MOUSE</name>
<sequence>MTSAAELKKPPLAPKPKLVGTNNKPPPPPIAPKPDIGSASVPRLTKKTKPAIAPKPKVPTNSVVQDIKHPPSKKPTLNLEEREPELPESTGKSNCKDVRDPHSDYILPTCSCSSGCIHEPRTRETQCVEQLVLEPLGMKENLENSKNGESSKRGSSWDSSSEKCRGQSGVVLKASILEEKLKEVLTQQRSPCGSPGRHRAPKKPEMNGDHSCTRQIRIEFADVSSSLTGFEKVPAHHNCHPQLPRDESQTLKTCQDGSAESRGHTDSCEPENKRVASDGISQKTEVKGLGPLEIHLLPYTSKFPTPKPRKTHAAARLRRQKHVDTPGESTEEPGNSNNGSSCLLEDYCLKNNKVSVLRQNALYNQGPVDEVRPANQRALTGDSNSGGQDSVGSQKAVQQQTPSLDTDSSLTSDSSGSGVSPAVDKETTYTQCSTQPLSLPKQVTSACTDQPPATCNPEVSAPPIQKESSSSRIIPKKPQRHSLPAAGVLKKAASEELVEKSSSGKETNVEKGLHRNYLHHPGPPNHGASASPFDMPNPTSEKPVWKLPHPILPFSGSPEALKRVTLSLNNEPSVSLTKPRAKSLSAVDADRCNKPCKDPPKKTSFKKLINVKLSIGFIKSDFQKIRSKSCQHGDVSAGHPLAREPKGLESDWQGLATGEEKRSKPTKAHSAENCSLESQKVKSWGQSSAVNGQRAESLDDRILSRHTSCTGDFGPEYENVRHYEEIPEYENLPFVMAGRNTPDLGWQNSSSVEDTDASLYEVEEPYNAPDGQLQLDPRHQPCSSGTSQEGKDALHLGLSDLPSDEEVINSSDEDDVSSESSKGEPDPLEDKQDEDAGMKSKVHHIAKEIMSSEKVFVDVLKLLHIDFRGAVAHASRQLGKPVIEDRILNQILYYLPQLYELNRDLLKELEERMLTWTEQQRIADIFVKKGPYLKMYSTYIKEFDKNVALLDEQCKKNPGFAAVVREFEMSPRCANLALKHYLLKPVQRIPQYRLLLTDYLKNLLEDSVDHRDTQDALAVVIEVANHANDTMKQGDNFQKLMQIQYSLSGHHEIVQPGRVFLKEGTLMKLSRKVMQPRMFFLFNDALLYTTPMQSGMYKLNNMLSLAGMKVRKPTQEAYQNELKIESVERSFILSASSAAERDDWLEAISSSIEEYAKKRITFCPSRSLDEDSERKEEVSPLGAKAPIWIPDTRATMCMICTSEFTLTWRRHHCRACGKIVCQACSSNKYGLDYLKGQLARVCEHCFQELQKLDHQLSPRVGSPGNHKSPSSALSSVLHSIPSGRKQKKIPAALKEVSANTEDSTMSGYLYRSKGSKKPWKHLWFVIKNKVLYTYAASEDVAALESQPLLGFTVTLVKDENSESKVFQLLHKGMVFYVFKADDAHSTQRWIDAFQEGTVL</sequence>
<feature type="chain" id="PRO_0000080953" description="FYVE, RhoGEF and PH domain-containing protein 6">
    <location>
        <begin position="1"/>
        <end position="1399"/>
    </location>
</feature>
<feature type="domain" description="DH" evidence="3">
    <location>
        <begin position="841"/>
        <end position="1030"/>
    </location>
</feature>
<feature type="domain" description="PH 1" evidence="5">
    <location>
        <begin position="1059"/>
        <end position="1153"/>
    </location>
</feature>
<feature type="domain" description="PH 2" evidence="5">
    <location>
        <begin position="1302"/>
        <end position="1398"/>
    </location>
</feature>
<feature type="zinc finger region" description="FYVE-type" evidence="4">
    <location>
        <begin position="1191"/>
        <end position="1250"/>
    </location>
</feature>
<feature type="region of interest" description="Disordered" evidence="6">
    <location>
        <begin position="1"/>
        <end position="99"/>
    </location>
</feature>
<feature type="region of interest" description="Disordered" evidence="6">
    <location>
        <begin position="138"/>
        <end position="164"/>
    </location>
</feature>
<feature type="region of interest" description="Disordered" evidence="6">
    <location>
        <begin position="185"/>
        <end position="210"/>
    </location>
</feature>
<feature type="region of interest" description="Disordered" evidence="6">
    <location>
        <begin position="235"/>
        <end position="281"/>
    </location>
</feature>
<feature type="region of interest" description="Disordered" evidence="6">
    <location>
        <begin position="299"/>
        <end position="341"/>
    </location>
</feature>
<feature type="region of interest" description="Disordered" evidence="6">
    <location>
        <begin position="367"/>
        <end position="479"/>
    </location>
</feature>
<feature type="region of interest" description="Disordered" evidence="6">
    <location>
        <begin position="515"/>
        <end position="542"/>
    </location>
</feature>
<feature type="region of interest" description="Disordered" evidence="6">
    <location>
        <begin position="631"/>
        <end position="650"/>
    </location>
</feature>
<feature type="region of interest" description="Disordered" evidence="6">
    <location>
        <begin position="657"/>
        <end position="678"/>
    </location>
</feature>
<feature type="region of interest" description="Disordered" evidence="6">
    <location>
        <begin position="768"/>
        <end position="840"/>
    </location>
</feature>
<feature type="compositionally biased region" description="Low complexity" evidence="6">
    <location>
        <begin position="50"/>
        <end position="60"/>
    </location>
</feature>
<feature type="compositionally biased region" description="Basic and acidic residues" evidence="6">
    <location>
        <begin position="259"/>
        <end position="276"/>
    </location>
</feature>
<feature type="compositionally biased region" description="Basic residues" evidence="6">
    <location>
        <begin position="307"/>
        <end position="321"/>
    </location>
</feature>
<feature type="compositionally biased region" description="Polar residues" evidence="6">
    <location>
        <begin position="332"/>
        <end position="341"/>
    </location>
</feature>
<feature type="compositionally biased region" description="Polar residues" evidence="6">
    <location>
        <begin position="377"/>
        <end position="402"/>
    </location>
</feature>
<feature type="compositionally biased region" description="Low complexity" evidence="6">
    <location>
        <begin position="403"/>
        <end position="418"/>
    </location>
</feature>
<feature type="compositionally biased region" description="Polar residues" evidence="6">
    <location>
        <begin position="428"/>
        <end position="453"/>
    </location>
</feature>
<feature type="compositionally biased region" description="Acidic residues" evidence="6">
    <location>
        <begin position="802"/>
        <end position="817"/>
    </location>
</feature>
<feature type="compositionally biased region" description="Basic and acidic residues" evidence="6">
    <location>
        <begin position="821"/>
        <end position="838"/>
    </location>
</feature>
<feature type="binding site" evidence="4">
    <location>
        <position position="1197"/>
    </location>
    <ligand>
        <name>Zn(2+)</name>
        <dbReference type="ChEBI" id="CHEBI:29105"/>
        <label>1</label>
    </ligand>
</feature>
<feature type="binding site" evidence="4">
    <location>
        <position position="1200"/>
    </location>
    <ligand>
        <name>Zn(2+)</name>
        <dbReference type="ChEBI" id="CHEBI:29105"/>
        <label>1</label>
    </ligand>
</feature>
<feature type="binding site" evidence="4">
    <location>
        <position position="1213"/>
    </location>
    <ligand>
        <name>Zn(2+)</name>
        <dbReference type="ChEBI" id="CHEBI:29105"/>
        <label>2</label>
    </ligand>
</feature>
<feature type="binding site" evidence="4">
    <location>
        <position position="1216"/>
    </location>
    <ligand>
        <name>Zn(2+)</name>
        <dbReference type="ChEBI" id="CHEBI:29105"/>
        <label>2</label>
    </ligand>
</feature>
<feature type="binding site" evidence="4">
    <location>
        <position position="1221"/>
    </location>
    <ligand>
        <name>Zn(2+)</name>
        <dbReference type="ChEBI" id="CHEBI:29105"/>
        <label>1</label>
    </ligand>
</feature>
<feature type="binding site" evidence="4">
    <location>
        <position position="1224"/>
    </location>
    <ligand>
        <name>Zn(2+)</name>
        <dbReference type="ChEBI" id="CHEBI:29105"/>
        <label>1</label>
    </ligand>
</feature>
<feature type="binding site" evidence="4">
    <location>
        <position position="1242"/>
    </location>
    <ligand>
        <name>Zn(2+)</name>
        <dbReference type="ChEBI" id="CHEBI:29105"/>
        <label>2</label>
    </ligand>
</feature>
<feature type="binding site" evidence="4">
    <location>
        <position position="1245"/>
    </location>
    <ligand>
        <name>Zn(2+)</name>
        <dbReference type="ChEBI" id="CHEBI:29105"/>
        <label>2</label>
    </ligand>
</feature>
<feature type="modified residue" description="Phosphoserine" evidence="2">
    <location>
        <position position="494"/>
    </location>
</feature>
<feature type="modified residue" description="Phosphoserine" evidence="2">
    <location>
        <position position="531"/>
    </location>
</feature>
<feature type="modified residue" description="Phosphoserine" evidence="9 10">
    <location>
        <position position="583"/>
    </location>
</feature>
<feature type="modified residue" description="Phosphoserine" evidence="2">
    <location>
        <position position="670"/>
    </location>
</feature>
<feature type="modified residue" description="Phosphoserine" evidence="2">
    <location>
        <position position="697"/>
    </location>
</feature>
<feature type="modified residue" description="Phosphoserine" evidence="2">
    <location>
        <position position="1167"/>
    </location>
</feature>
<feature type="splice variant" id="VSP_013093" description="In isoform 2." evidence="7">
    <location>
        <begin position="1"/>
        <end position="934"/>
    </location>
</feature>
<feature type="sequence conflict" description="In Ref. 2; BAC31876." evidence="8" ref="2">
    <original>Q</original>
    <variation>L</variation>
    <location>
        <position position="126"/>
    </location>
</feature>
<feature type="sequence conflict" description="In Ref. 2; BAC31876." evidence="8" ref="2">
    <original>R</original>
    <variation>H</variation>
    <location>
        <position position="262"/>
    </location>
</feature>
<feature type="sequence conflict" description="In Ref. 2; BAC31876." evidence="8" ref="2">
    <original>V</original>
    <variation>D</variation>
    <location>
        <position position="286"/>
    </location>
</feature>
<feature type="sequence conflict" description="In Ref. 2; BAC31876." evidence="8" ref="2">
    <original>YC</original>
    <variation>S</variation>
    <location>
        <begin position="347"/>
        <end position="348"/>
    </location>
</feature>
<feature type="sequence conflict" description="In Ref. 2; BAC31876." evidence="8" ref="2">
    <original>V</original>
    <variation>A</variation>
    <location>
        <position position="368"/>
    </location>
</feature>
<feature type="sequence conflict" description="In Ref. 2; BAC31876 and 3; AAH26860." evidence="8" ref="2 3">
    <original>Y</original>
    <variation>H</variation>
    <location>
        <position position="517"/>
    </location>
</feature>
<feature type="sequence conflict" description="In Ref. 2; BAC31876 and 3; AAH26860." evidence="8" ref="2 3">
    <original>A</original>
    <variation>T</variation>
    <location>
        <position position="637"/>
    </location>
</feature>
<feature type="sequence conflict" description="In Ref. 2; BAC31876 and 3; AAH26860." evidence="8" ref="2 3">
    <original>K</original>
    <variation>Q</variation>
    <location>
        <position position="791"/>
    </location>
</feature>
<feature type="strand" evidence="11">
    <location>
        <begin position="1306"/>
        <end position="1314"/>
    </location>
</feature>
<feature type="strand" evidence="11">
    <location>
        <begin position="1320"/>
        <end position="1327"/>
    </location>
</feature>
<feature type="strand" evidence="11">
    <location>
        <begin position="1330"/>
        <end position="1335"/>
    </location>
</feature>
<feature type="strand" evidence="11">
    <location>
        <begin position="1343"/>
        <end position="1347"/>
    </location>
</feature>
<feature type="strand" evidence="11">
    <location>
        <begin position="1349"/>
        <end position="1355"/>
    </location>
</feature>
<feature type="strand" evidence="11">
    <location>
        <begin position="1362"/>
        <end position="1370"/>
    </location>
</feature>
<feature type="strand" evidence="11">
    <location>
        <begin position="1373"/>
        <end position="1379"/>
    </location>
</feature>
<feature type="helix" evidence="11">
    <location>
        <begin position="1383"/>
        <end position="1397"/>
    </location>
</feature>
<reference key="1">
    <citation type="journal article" date="2004" name="DNA Res.">
        <title>Prediction of the coding sequences of mouse homologues of KIAA gene: IV. The complete nucleotide sequences of 500 mouse KIAA-homologous cDNAs identified by screening of terminal sequences of cDNA clones randomly sampled from size-fractionated libraries.</title>
        <authorList>
            <person name="Okazaki N."/>
            <person name="Kikuno R."/>
            <person name="Ohara R."/>
            <person name="Inamoto S."/>
            <person name="Koseki H."/>
            <person name="Hiraoka S."/>
            <person name="Saga Y."/>
            <person name="Seino S."/>
            <person name="Nishimura M."/>
            <person name="Kaisho T."/>
            <person name="Hoshino K."/>
            <person name="Kitamura H."/>
            <person name="Nagase T."/>
            <person name="Ohara O."/>
            <person name="Koga H."/>
        </authorList>
    </citation>
    <scope>NUCLEOTIDE SEQUENCE [LARGE SCALE MRNA] (ISOFORM 1)</scope>
    <source>
        <tissue>Pancreatic islet</tissue>
    </source>
</reference>
<reference key="2">
    <citation type="journal article" date="2005" name="Science">
        <title>The transcriptional landscape of the mammalian genome.</title>
        <authorList>
            <person name="Carninci P."/>
            <person name="Kasukawa T."/>
            <person name="Katayama S."/>
            <person name="Gough J."/>
            <person name="Frith M.C."/>
            <person name="Maeda N."/>
            <person name="Oyama R."/>
            <person name="Ravasi T."/>
            <person name="Lenhard B."/>
            <person name="Wells C."/>
            <person name="Kodzius R."/>
            <person name="Shimokawa K."/>
            <person name="Bajic V.B."/>
            <person name="Brenner S.E."/>
            <person name="Batalov S."/>
            <person name="Forrest A.R."/>
            <person name="Zavolan M."/>
            <person name="Davis M.J."/>
            <person name="Wilming L.G."/>
            <person name="Aidinis V."/>
            <person name="Allen J.E."/>
            <person name="Ambesi-Impiombato A."/>
            <person name="Apweiler R."/>
            <person name="Aturaliya R.N."/>
            <person name="Bailey T.L."/>
            <person name="Bansal M."/>
            <person name="Baxter L."/>
            <person name="Beisel K.W."/>
            <person name="Bersano T."/>
            <person name="Bono H."/>
            <person name="Chalk A.M."/>
            <person name="Chiu K.P."/>
            <person name="Choudhary V."/>
            <person name="Christoffels A."/>
            <person name="Clutterbuck D.R."/>
            <person name="Crowe M.L."/>
            <person name="Dalla E."/>
            <person name="Dalrymple B.P."/>
            <person name="de Bono B."/>
            <person name="Della Gatta G."/>
            <person name="di Bernardo D."/>
            <person name="Down T."/>
            <person name="Engstrom P."/>
            <person name="Fagiolini M."/>
            <person name="Faulkner G."/>
            <person name="Fletcher C.F."/>
            <person name="Fukushima T."/>
            <person name="Furuno M."/>
            <person name="Futaki S."/>
            <person name="Gariboldi M."/>
            <person name="Georgii-Hemming P."/>
            <person name="Gingeras T.R."/>
            <person name="Gojobori T."/>
            <person name="Green R.E."/>
            <person name="Gustincich S."/>
            <person name="Harbers M."/>
            <person name="Hayashi Y."/>
            <person name="Hensch T.K."/>
            <person name="Hirokawa N."/>
            <person name="Hill D."/>
            <person name="Huminiecki L."/>
            <person name="Iacono M."/>
            <person name="Ikeo K."/>
            <person name="Iwama A."/>
            <person name="Ishikawa T."/>
            <person name="Jakt M."/>
            <person name="Kanapin A."/>
            <person name="Katoh M."/>
            <person name="Kawasawa Y."/>
            <person name="Kelso J."/>
            <person name="Kitamura H."/>
            <person name="Kitano H."/>
            <person name="Kollias G."/>
            <person name="Krishnan S.P."/>
            <person name="Kruger A."/>
            <person name="Kummerfeld S.K."/>
            <person name="Kurochkin I.V."/>
            <person name="Lareau L.F."/>
            <person name="Lazarevic D."/>
            <person name="Lipovich L."/>
            <person name="Liu J."/>
            <person name="Liuni S."/>
            <person name="McWilliam S."/>
            <person name="Madan Babu M."/>
            <person name="Madera M."/>
            <person name="Marchionni L."/>
            <person name="Matsuda H."/>
            <person name="Matsuzawa S."/>
            <person name="Miki H."/>
            <person name="Mignone F."/>
            <person name="Miyake S."/>
            <person name="Morris K."/>
            <person name="Mottagui-Tabar S."/>
            <person name="Mulder N."/>
            <person name="Nakano N."/>
            <person name="Nakauchi H."/>
            <person name="Ng P."/>
            <person name="Nilsson R."/>
            <person name="Nishiguchi S."/>
            <person name="Nishikawa S."/>
            <person name="Nori F."/>
            <person name="Ohara O."/>
            <person name="Okazaki Y."/>
            <person name="Orlando V."/>
            <person name="Pang K.C."/>
            <person name="Pavan W.J."/>
            <person name="Pavesi G."/>
            <person name="Pesole G."/>
            <person name="Petrovsky N."/>
            <person name="Piazza S."/>
            <person name="Reed J."/>
            <person name="Reid J.F."/>
            <person name="Ring B.Z."/>
            <person name="Ringwald M."/>
            <person name="Rost B."/>
            <person name="Ruan Y."/>
            <person name="Salzberg S.L."/>
            <person name="Sandelin A."/>
            <person name="Schneider C."/>
            <person name="Schoenbach C."/>
            <person name="Sekiguchi K."/>
            <person name="Semple C.A."/>
            <person name="Seno S."/>
            <person name="Sessa L."/>
            <person name="Sheng Y."/>
            <person name="Shibata Y."/>
            <person name="Shimada H."/>
            <person name="Shimada K."/>
            <person name="Silva D."/>
            <person name="Sinclair B."/>
            <person name="Sperling S."/>
            <person name="Stupka E."/>
            <person name="Sugiura K."/>
            <person name="Sultana R."/>
            <person name="Takenaka Y."/>
            <person name="Taki K."/>
            <person name="Tammoja K."/>
            <person name="Tan S.L."/>
            <person name="Tang S."/>
            <person name="Taylor M.S."/>
            <person name="Tegner J."/>
            <person name="Teichmann S.A."/>
            <person name="Ueda H.R."/>
            <person name="van Nimwegen E."/>
            <person name="Verardo R."/>
            <person name="Wei C.L."/>
            <person name="Yagi K."/>
            <person name="Yamanishi H."/>
            <person name="Zabarovsky E."/>
            <person name="Zhu S."/>
            <person name="Zimmer A."/>
            <person name="Hide W."/>
            <person name="Bult C."/>
            <person name="Grimmond S.M."/>
            <person name="Teasdale R.D."/>
            <person name="Liu E.T."/>
            <person name="Brusic V."/>
            <person name="Quackenbush J."/>
            <person name="Wahlestedt C."/>
            <person name="Mattick J.S."/>
            <person name="Hume D.A."/>
            <person name="Kai C."/>
            <person name="Sasaki D."/>
            <person name="Tomaru Y."/>
            <person name="Fukuda S."/>
            <person name="Kanamori-Katayama M."/>
            <person name="Suzuki M."/>
            <person name="Aoki J."/>
            <person name="Arakawa T."/>
            <person name="Iida J."/>
            <person name="Imamura K."/>
            <person name="Itoh M."/>
            <person name="Kato T."/>
            <person name="Kawaji H."/>
            <person name="Kawagashira N."/>
            <person name="Kawashima T."/>
            <person name="Kojima M."/>
            <person name="Kondo S."/>
            <person name="Konno H."/>
            <person name="Nakano K."/>
            <person name="Ninomiya N."/>
            <person name="Nishio T."/>
            <person name="Okada M."/>
            <person name="Plessy C."/>
            <person name="Shibata K."/>
            <person name="Shiraki T."/>
            <person name="Suzuki S."/>
            <person name="Tagami M."/>
            <person name="Waki K."/>
            <person name="Watahiki A."/>
            <person name="Okamura-Oho Y."/>
            <person name="Suzuki H."/>
            <person name="Kawai J."/>
            <person name="Hayashizaki Y."/>
        </authorList>
    </citation>
    <scope>NUCLEOTIDE SEQUENCE [LARGE SCALE MRNA] (ISOFORM 2)</scope>
    <scope>NUCLEOTIDE SEQUENCE [LARGE SCALE MRNA] OF 1-1156 (ISOFORM 1)</scope>
    <source>
        <strain>C57BL/6J</strain>
        <tissue>Retina</tissue>
        <tissue>Testis</tissue>
    </source>
</reference>
<reference key="3">
    <citation type="journal article" date="2004" name="Genome Res.">
        <title>The status, quality, and expansion of the NIH full-length cDNA project: the Mammalian Gene Collection (MGC).</title>
        <authorList>
            <consortium name="The MGC Project Team"/>
        </authorList>
    </citation>
    <scope>NUCLEOTIDE SEQUENCE [LARGE SCALE MRNA] OF 457-1399 (ISOFORM 1)</scope>
    <source>
        <strain>FVB/N</strain>
        <tissue>Mammary gland</tissue>
    </source>
</reference>
<reference key="4">
    <citation type="journal article" date="2009" name="Immunity">
        <title>The phagosomal proteome in interferon-gamma-activated macrophages.</title>
        <authorList>
            <person name="Trost M."/>
            <person name="English L."/>
            <person name="Lemieux S."/>
            <person name="Courcelles M."/>
            <person name="Desjardins M."/>
            <person name="Thibault P."/>
        </authorList>
    </citation>
    <scope>PHOSPHORYLATION [LARGE SCALE ANALYSIS] AT SER-583</scope>
    <scope>IDENTIFICATION BY MASS SPECTROMETRY [LARGE SCALE ANALYSIS]</scope>
</reference>
<reference key="5">
    <citation type="journal article" date="2010" name="Cell">
        <title>A tissue-specific atlas of mouse protein phosphorylation and expression.</title>
        <authorList>
            <person name="Huttlin E.L."/>
            <person name="Jedrychowski M.P."/>
            <person name="Elias J.E."/>
            <person name="Goswami T."/>
            <person name="Rad R."/>
            <person name="Beausoleil S.A."/>
            <person name="Villen J."/>
            <person name="Haas W."/>
            <person name="Sowa M.E."/>
            <person name="Gygi S.P."/>
        </authorList>
    </citation>
    <scope>PHOSPHORYLATION [LARGE SCALE ANALYSIS] AT SER-583</scope>
    <scope>IDENTIFICATION BY MASS SPECTROMETRY [LARGE SCALE ANALYSIS]</scope>
    <source>
        <tissue>Brain</tissue>
        <tissue>Testis</tissue>
    </source>
</reference>
<reference key="6">
    <citation type="submission" date="2004-11" db="PDB data bank">
        <title>Solution structure of the pleckstrin homology domain of mouse ethanol decreased 4 protein.</title>
        <authorList>
            <consortium name="RIKEN structural genomics initiative (RSGI)"/>
        </authorList>
    </citation>
    <scope>STRUCTURE BY NMR OF 1303-1398</scope>
</reference>
<proteinExistence type="evidence at protein level"/>
<protein>
    <recommendedName>
        <fullName>FYVE, RhoGEF and PH domain-containing protein 6</fullName>
    </recommendedName>
</protein>
<evidence type="ECO:0000250" key="1"/>
<evidence type="ECO:0000250" key="2">
    <source>
        <dbReference type="UniProtKB" id="Q6ZV73"/>
    </source>
</evidence>
<evidence type="ECO:0000255" key="3">
    <source>
        <dbReference type="PROSITE-ProRule" id="PRU00062"/>
    </source>
</evidence>
<evidence type="ECO:0000255" key="4">
    <source>
        <dbReference type="PROSITE-ProRule" id="PRU00091"/>
    </source>
</evidence>
<evidence type="ECO:0000255" key="5">
    <source>
        <dbReference type="PROSITE-ProRule" id="PRU00145"/>
    </source>
</evidence>
<evidence type="ECO:0000256" key="6">
    <source>
        <dbReference type="SAM" id="MobiDB-lite"/>
    </source>
</evidence>
<evidence type="ECO:0000303" key="7">
    <source>
    </source>
</evidence>
<evidence type="ECO:0000305" key="8"/>
<evidence type="ECO:0007744" key="9">
    <source>
    </source>
</evidence>
<evidence type="ECO:0007744" key="10">
    <source>
    </source>
</evidence>
<evidence type="ECO:0007829" key="11">
    <source>
        <dbReference type="PDB" id="1WGQ"/>
    </source>
</evidence>
<organism>
    <name type="scientific">Mus musculus</name>
    <name type="common">Mouse</name>
    <dbReference type="NCBI Taxonomy" id="10090"/>
    <lineage>
        <taxon>Eukaryota</taxon>
        <taxon>Metazoa</taxon>
        <taxon>Chordata</taxon>
        <taxon>Craniata</taxon>
        <taxon>Vertebrata</taxon>
        <taxon>Euteleostomi</taxon>
        <taxon>Mammalia</taxon>
        <taxon>Eutheria</taxon>
        <taxon>Euarchontoglires</taxon>
        <taxon>Glires</taxon>
        <taxon>Rodentia</taxon>
        <taxon>Myomorpha</taxon>
        <taxon>Muroidea</taxon>
        <taxon>Muridae</taxon>
        <taxon>Murinae</taxon>
        <taxon>Mus</taxon>
        <taxon>Mus</taxon>
    </lineage>
</organism>
<accession>Q69ZL1</accession>
<accession>Q8C8W5</accession>
<accession>Q8K3B0</accession>
<accession>Q9D3Y7</accession>